<dbReference type="EMBL" id="U05958">
    <property type="protein sequence ID" value="AAB60617.1"/>
    <property type="molecule type" value="mRNA"/>
</dbReference>
<dbReference type="PIR" id="A53491">
    <property type="entry name" value="A53491"/>
</dbReference>
<dbReference type="SMR" id="P55013"/>
<dbReference type="TCDB" id="2.A.30.1.5">
    <property type="family name" value="the cation-chloride cotransporter (ccc) family"/>
</dbReference>
<dbReference type="GlyCosmos" id="P55013">
    <property type="glycosylation" value="3 sites, No reported glycans"/>
</dbReference>
<dbReference type="iPTMnet" id="P55013"/>
<dbReference type="GO" id="GO:0016324">
    <property type="term" value="C:apical plasma membrane"/>
    <property type="evidence" value="ECO:0007669"/>
    <property type="project" value="TreeGrafter"/>
</dbReference>
<dbReference type="GO" id="GO:0016323">
    <property type="term" value="C:basolateral plasma membrane"/>
    <property type="evidence" value="ECO:0007669"/>
    <property type="project" value="UniProtKB-SubCell"/>
</dbReference>
<dbReference type="GO" id="GO:0071944">
    <property type="term" value="C:cell periphery"/>
    <property type="evidence" value="ECO:0000314"/>
    <property type="project" value="ARUK-UCL"/>
</dbReference>
<dbReference type="GO" id="GO:0008519">
    <property type="term" value="F:ammonium channel activity"/>
    <property type="evidence" value="ECO:0007669"/>
    <property type="project" value="TreeGrafter"/>
</dbReference>
<dbReference type="GO" id="GO:0046872">
    <property type="term" value="F:metal ion binding"/>
    <property type="evidence" value="ECO:0007669"/>
    <property type="project" value="UniProtKB-KW"/>
</dbReference>
<dbReference type="GO" id="GO:0046873">
    <property type="term" value="F:metal ion transmembrane transporter activity"/>
    <property type="evidence" value="ECO:0000314"/>
    <property type="project" value="ARUK-UCL"/>
</dbReference>
<dbReference type="GO" id="GO:0008511">
    <property type="term" value="F:sodium:potassium:chloride symporter activity"/>
    <property type="evidence" value="ECO:0007669"/>
    <property type="project" value="TreeGrafter"/>
</dbReference>
<dbReference type="GO" id="GO:0006884">
    <property type="term" value="P:cell volume homeostasis"/>
    <property type="evidence" value="ECO:0007669"/>
    <property type="project" value="TreeGrafter"/>
</dbReference>
<dbReference type="GO" id="GO:0055064">
    <property type="term" value="P:chloride ion homeostasis"/>
    <property type="evidence" value="ECO:0007669"/>
    <property type="project" value="TreeGrafter"/>
</dbReference>
<dbReference type="GO" id="GO:0098659">
    <property type="term" value="P:inorganic cation import across plasma membrane"/>
    <property type="evidence" value="ECO:0000314"/>
    <property type="project" value="ARUK-UCL"/>
</dbReference>
<dbReference type="GO" id="GO:0055075">
    <property type="term" value="P:potassium ion homeostasis"/>
    <property type="evidence" value="ECO:0007669"/>
    <property type="project" value="TreeGrafter"/>
</dbReference>
<dbReference type="GO" id="GO:1990573">
    <property type="term" value="P:potassium ion import across plasma membrane"/>
    <property type="evidence" value="ECO:0007669"/>
    <property type="project" value="TreeGrafter"/>
</dbReference>
<dbReference type="GO" id="GO:0055078">
    <property type="term" value="P:sodium ion homeostasis"/>
    <property type="evidence" value="ECO:0007669"/>
    <property type="project" value="TreeGrafter"/>
</dbReference>
<dbReference type="FunFam" id="1.20.1740.10:FF:000005">
    <property type="entry name" value="Solute carrier family 12 member 1"/>
    <property type="match status" value="1"/>
</dbReference>
<dbReference type="Gene3D" id="1.20.1740.10">
    <property type="entry name" value="Amino acid/polyamine transporter I"/>
    <property type="match status" value="1"/>
</dbReference>
<dbReference type="InterPro" id="IPR004841">
    <property type="entry name" value="AA-permease/SLC12A_dom"/>
</dbReference>
<dbReference type="InterPro" id="IPR013612">
    <property type="entry name" value="AA_permease_N"/>
</dbReference>
<dbReference type="InterPro" id="IPR002444">
    <property type="entry name" value="NKCC1"/>
</dbReference>
<dbReference type="InterPro" id="IPR018491">
    <property type="entry name" value="SLC12_C"/>
</dbReference>
<dbReference type="InterPro" id="IPR002443">
    <property type="entry name" value="SLC12A1/SLC12A2"/>
</dbReference>
<dbReference type="InterPro" id="IPR004842">
    <property type="entry name" value="SLC12A_fam"/>
</dbReference>
<dbReference type="NCBIfam" id="TIGR00930">
    <property type="entry name" value="2a30"/>
    <property type="match status" value="1"/>
</dbReference>
<dbReference type="PANTHER" id="PTHR11827:SF58">
    <property type="entry name" value="SOLUTE CARRIER FAMILY 12 MEMBER 2"/>
    <property type="match status" value="1"/>
</dbReference>
<dbReference type="PANTHER" id="PTHR11827">
    <property type="entry name" value="SOLUTE CARRIER FAMILY 12, CATION COTRANSPORTERS"/>
    <property type="match status" value="1"/>
</dbReference>
<dbReference type="Pfam" id="PF00324">
    <property type="entry name" value="AA_permease"/>
    <property type="match status" value="1"/>
</dbReference>
<dbReference type="Pfam" id="PF08403">
    <property type="entry name" value="AA_permease_N"/>
    <property type="match status" value="1"/>
</dbReference>
<dbReference type="Pfam" id="PF03522">
    <property type="entry name" value="SLC12"/>
    <property type="match status" value="1"/>
</dbReference>
<dbReference type="PRINTS" id="PR01207">
    <property type="entry name" value="NAKCLTRNSPRT"/>
</dbReference>
<dbReference type="PRINTS" id="PR01208">
    <property type="entry name" value="NAKCLTRSPRT1"/>
</dbReference>
<gene>
    <name type="primary">SLC12A2</name>
    <name evidence="8" type="synonym">NKCC1</name>
</gene>
<name>S12A2_SQUAC</name>
<proteinExistence type="evidence at protein level"/>
<evidence type="ECO:0000250" key="1">
    <source>
        <dbReference type="UniProtKB" id="A0A0G2KTI4"/>
    </source>
</evidence>
<evidence type="ECO:0000250" key="2">
    <source>
        <dbReference type="UniProtKB" id="P55011"/>
    </source>
</evidence>
<evidence type="ECO:0000255" key="3"/>
<evidence type="ECO:0000256" key="4">
    <source>
        <dbReference type="SAM" id="MobiDB-lite"/>
    </source>
</evidence>
<evidence type="ECO:0000269" key="5">
    <source>
    </source>
</evidence>
<evidence type="ECO:0000269" key="6">
    <source>
    </source>
</evidence>
<evidence type="ECO:0000269" key="7">
    <source>
    </source>
</evidence>
<evidence type="ECO:0000303" key="8">
    <source>
    </source>
</evidence>
<evidence type="ECO:0000303" key="9">
    <source>
    </source>
</evidence>
<evidence type="ECO:0000305" key="10"/>
<evidence type="ECO:0000305" key="11">
    <source>
    </source>
</evidence>
<organism>
    <name type="scientific">Squalus acanthias</name>
    <name type="common">Spiny dogfish</name>
    <dbReference type="NCBI Taxonomy" id="7797"/>
    <lineage>
        <taxon>Eukaryota</taxon>
        <taxon>Metazoa</taxon>
        <taxon>Chordata</taxon>
        <taxon>Craniata</taxon>
        <taxon>Vertebrata</taxon>
        <taxon>Chondrichthyes</taxon>
        <taxon>Elasmobranchii</taxon>
        <taxon>Squalomorphii</taxon>
        <taxon>Squaliformes</taxon>
        <taxon>Squalidae</taxon>
        <taxon>Squalus</taxon>
    </lineage>
</organism>
<comment type="function">
    <text evidence="5 6 7">Cation-chloride cotransporter which mediates the electroneutral transport of chloride, potassium and/or sodium ions across the membrane. Plays a vital role in the regulation of ionic balance and cell volume.</text>
</comment>
<comment type="catalytic activity">
    <reaction evidence="2">
        <text>K(+)(out) + 2 chloride(out) + Na(+)(out) = K(+)(in) + 2 chloride(in) + Na(+)(in)</text>
        <dbReference type="Rhea" id="RHEA:72395"/>
        <dbReference type="ChEBI" id="CHEBI:17996"/>
        <dbReference type="ChEBI" id="CHEBI:29101"/>
        <dbReference type="ChEBI" id="CHEBI:29103"/>
    </reaction>
    <physiologicalReaction direction="left-to-right" evidence="2">
        <dbReference type="Rhea" id="RHEA:72396"/>
    </physiologicalReaction>
</comment>
<comment type="activity regulation">
    <text evidence="6 7">Activated following phosphorylation by OXSR1/OSR1 and STK39/SPAK (PubMed:16669787). Inhibited by bumetanide (PubMed:8134373).</text>
</comment>
<comment type="subunit">
    <text evidence="1">Homodimer.</text>
</comment>
<comment type="subcellular location">
    <subcellularLocation>
        <location evidence="11">Basolateral cell membrane</location>
        <topology evidence="3">Multi-pass membrane protein</topology>
    </subcellularLocation>
</comment>
<comment type="tissue specificity">
    <text evidence="7">Strongly expressed in rectal gland, brain, gill and intestine. Also detected at lower levels in heart, kidney, and testis.</text>
</comment>
<comment type="PTM">
    <text evidence="6">Phosphorylated at Thr-175, Thr-179 and Thr-184 by OXSR1/OSR1 and STK39/SPAK downstream of WNK kinases (WNK1, WNK2, WNK3 or WNK4), promoting its activity.</text>
</comment>
<comment type="similarity">
    <text evidence="10">Belongs to the SLC12A transporter family.</text>
</comment>
<accession>P55013</accession>
<feature type="chain" id="PRO_0000178025" description="Solute carrier family 12 member 2">
    <location>
        <begin position="1"/>
        <end position="1191"/>
    </location>
</feature>
<feature type="topological domain" description="Cytoplasmic" evidence="10">
    <location>
        <begin position="1"/>
        <end position="258"/>
    </location>
</feature>
<feature type="transmembrane region" description="Discontinuously helical; Name=1" evidence="2">
    <location>
        <begin position="259"/>
        <end position="288"/>
    </location>
</feature>
<feature type="transmembrane region" description="Helical; Name=2" evidence="2">
    <location>
        <begin position="289"/>
        <end position="308"/>
    </location>
</feature>
<feature type="topological domain" description="Cytoplasmic" evidence="10">
    <location>
        <begin position="309"/>
        <end position="339"/>
    </location>
</feature>
<feature type="transmembrane region" description="Helical; Name=3" evidence="2">
    <location>
        <begin position="340"/>
        <end position="367"/>
    </location>
</feature>
<feature type="topological domain" description="Extracellular" evidence="10">
    <location>
        <begin position="368"/>
        <end position="377"/>
    </location>
</feature>
<feature type="transmembrane region" description="Helical; Name=4" evidence="2">
    <location>
        <begin position="378"/>
        <end position="401"/>
    </location>
</feature>
<feature type="topological domain" description="Cytoplasmic" evidence="10">
    <location>
        <begin position="402"/>
        <end position="404"/>
    </location>
</feature>
<feature type="transmembrane region" description="Helical; Name=5" evidence="2">
    <location>
        <begin position="405"/>
        <end position="426"/>
    </location>
</feature>
<feature type="topological domain" description="Extracellular" evidence="10">
    <location>
        <begin position="427"/>
        <end position="458"/>
    </location>
</feature>
<feature type="transmembrane region" description="Discontinuously helical; Name=6" evidence="2">
    <location>
        <begin position="459"/>
        <end position="476"/>
    </location>
</feature>
<feature type="topological domain" description="Cytoplasmic" evidence="10">
    <location>
        <begin position="477"/>
        <end position="491"/>
    </location>
</feature>
<feature type="transmembrane region" description="Helical; Name=7" evidence="2">
    <location>
        <begin position="492"/>
        <end position="513"/>
    </location>
</feature>
<feature type="topological domain" description="Extracellular" evidence="10">
    <location>
        <begin position="514"/>
        <end position="571"/>
    </location>
</feature>
<feature type="transmembrane region" description="Helical; Name=8" evidence="2">
    <location>
        <begin position="572"/>
        <end position="596"/>
    </location>
</feature>
<feature type="topological domain" description="Cytoplasmic" evidence="10">
    <location>
        <begin position="597"/>
        <end position="624"/>
    </location>
</feature>
<feature type="transmembrane region" description="Helical; Name=9" evidence="2">
    <location>
        <begin position="625"/>
        <end position="645"/>
    </location>
</feature>
<feature type="transmembrane region" description="Helical; Name=10" evidence="2">
    <location>
        <begin position="646"/>
        <end position="664"/>
    </location>
</feature>
<feature type="topological domain" description="Cytoplasmic" evidence="10">
    <location>
        <begin position="665"/>
        <end position="687"/>
    </location>
</feature>
<feature type="transmembrane region" description="Helical; Name=11" evidence="2">
    <location>
        <begin position="688"/>
        <end position="705"/>
    </location>
</feature>
<feature type="transmembrane region" description="Helical; Name=12" evidence="2">
    <location>
        <begin position="706"/>
        <end position="718"/>
    </location>
</feature>
<feature type="topological domain" description="Cytoplasmic" evidence="10">
    <location>
        <begin position="719"/>
        <end position="1191"/>
    </location>
</feature>
<feature type="region of interest" description="Disordered" evidence="4">
    <location>
        <begin position="1"/>
        <end position="166"/>
    </location>
</feature>
<feature type="region of interest" description="Scissor helix" evidence="2">
    <location>
        <begin position="734"/>
        <end position="751"/>
    </location>
</feature>
<feature type="region of interest" description="Disordered" evidence="4">
    <location>
        <begin position="929"/>
        <end position="972"/>
    </location>
</feature>
<feature type="compositionally biased region" description="Low complexity" evidence="4">
    <location>
        <begin position="13"/>
        <end position="25"/>
    </location>
</feature>
<feature type="compositionally biased region" description="Low complexity" evidence="4">
    <location>
        <begin position="59"/>
        <end position="69"/>
    </location>
</feature>
<feature type="compositionally biased region" description="Low complexity" evidence="4">
    <location>
        <begin position="80"/>
        <end position="99"/>
    </location>
</feature>
<feature type="compositionally biased region" description="Low complexity" evidence="4">
    <location>
        <begin position="131"/>
        <end position="141"/>
    </location>
</feature>
<feature type="compositionally biased region" description="Polar residues" evidence="4">
    <location>
        <begin position="142"/>
        <end position="155"/>
    </location>
</feature>
<feature type="compositionally biased region" description="Low complexity" evidence="4">
    <location>
        <begin position="935"/>
        <end position="948"/>
    </location>
</feature>
<feature type="binding site" evidence="2">
    <location>
        <position position="269"/>
    </location>
    <ligand>
        <name>Na(+)</name>
        <dbReference type="ChEBI" id="CHEBI:29101"/>
    </ligand>
</feature>
<feature type="binding site" evidence="2">
    <location>
        <position position="270"/>
    </location>
    <ligand>
        <name>K(+)</name>
        <dbReference type="ChEBI" id="CHEBI:29103"/>
    </ligand>
</feature>
<feature type="binding site" evidence="2">
    <location>
        <position position="271"/>
    </location>
    <ligand>
        <name>K(+)</name>
        <dbReference type="ChEBI" id="CHEBI:29103"/>
    </ligand>
</feature>
<feature type="binding site" evidence="2">
    <location>
        <position position="272"/>
    </location>
    <ligand>
        <name>Na(+)</name>
        <dbReference type="ChEBI" id="CHEBI:29101"/>
    </ligand>
</feature>
<feature type="binding site" evidence="2">
    <location>
        <position position="273"/>
    </location>
    <ligand>
        <name>chloride</name>
        <dbReference type="ChEBI" id="CHEBI:17996"/>
        <label>1</label>
    </ligand>
</feature>
<feature type="binding site" evidence="2">
    <location>
        <position position="274"/>
    </location>
    <ligand>
        <name>chloride</name>
        <dbReference type="ChEBI" id="CHEBI:17996"/>
        <label>1</label>
    </ligand>
</feature>
<feature type="binding site" evidence="2">
    <location>
        <position position="275"/>
    </location>
    <ligand>
        <name>chloride</name>
        <dbReference type="ChEBI" id="CHEBI:17996"/>
        <label>1</label>
    </ligand>
</feature>
<feature type="binding site" evidence="2">
    <location>
        <position position="344"/>
    </location>
    <ligand>
        <name>chloride</name>
        <dbReference type="ChEBI" id="CHEBI:17996"/>
        <label>2</label>
    </ligand>
</feature>
<feature type="binding site" evidence="2">
    <location>
        <position position="355"/>
    </location>
    <ligand>
        <name>K(+)</name>
        <dbReference type="ChEBI" id="CHEBI:29103"/>
    </ligand>
</feature>
<feature type="binding site" evidence="2">
    <location>
        <position position="468"/>
    </location>
    <ligand>
        <name>chloride</name>
        <dbReference type="ChEBI" id="CHEBI:17996"/>
        <label>1</label>
    </ligand>
</feature>
<feature type="binding site" evidence="2">
    <location>
        <position position="468"/>
    </location>
    <ligand>
        <name>K(+)</name>
        <dbReference type="ChEBI" id="CHEBI:29103"/>
    </ligand>
</feature>
<feature type="binding site" evidence="2">
    <location>
        <position position="469"/>
    </location>
    <ligand>
        <name>chloride</name>
        <dbReference type="ChEBI" id="CHEBI:17996"/>
        <label>1</label>
    </ligand>
</feature>
<feature type="binding site" evidence="2">
    <location>
        <position position="469"/>
    </location>
    <ligand>
        <name>K(+)</name>
        <dbReference type="ChEBI" id="CHEBI:29103"/>
    </ligand>
</feature>
<feature type="binding site" evidence="2">
    <location>
        <position position="471"/>
    </location>
    <ligand>
        <name>K(+)</name>
        <dbReference type="ChEBI" id="CHEBI:29103"/>
    </ligand>
</feature>
<feature type="binding site" evidence="2">
    <location>
        <position position="472"/>
    </location>
    <ligand>
        <name>chloride</name>
        <dbReference type="ChEBI" id="CHEBI:17996"/>
        <label>2</label>
    </ligand>
</feature>
<feature type="binding site" evidence="2">
    <location>
        <position position="473"/>
    </location>
    <ligand>
        <name>chloride</name>
        <dbReference type="ChEBI" id="CHEBI:17996"/>
        <label>2</label>
    </ligand>
</feature>
<feature type="binding site" evidence="2">
    <location>
        <position position="583"/>
    </location>
    <ligand>
        <name>Na(+)</name>
        <dbReference type="ChEBI" id="CHEBI:29101"/>
    </ligand>
</feature>
<feature type="binding site" evidence="2">
    <location>
        <position position="586"/>
    </location>
    <ligand>
        <name>Na(+)</name>
        <dbReference type="ChEBI" id="CHEBI:29101"/>
    </ligand>
</feature>
<feature type="binding site" evidence="2">
    <location>
        <position position="587"/>
    </location>
    <ligand>
        <name>Na(+)</name>
        <dbReference type="ChEBI" id="CHEBI:29101"/>
    </ligand>
</feature>
<feature type="binding site" evidence="2">
    <location>
        <position position="655"/>
    </location>
    <ligand>
        <name>chloride</name>
        <dbReference type="ChEBI" id="CHEBI:17996"/>
        <label>2</label>
    </ligand>
</feature>
<feature type="binding site" evidence="2">
    <location>
        <position position="659"/>
    </location>
    <ligand>
        <name>chloride</name>
        <dbReference type="ChEBI" id="CHEBI:17996"/>
        <label>2</label>
    </ligand>
</feature>
<feature type="modified residue" description="Phosphothreonine; by OXSR1 and STK39" evidence="6">
    <location>
        <position position="175"/>
    </location>
</feature>
<feature type="modified residue" description="Phosphothreonine; by OXSR1 and STK39" evidence="6">
    <location>
        <position position="179"/>
    </location>
</feature>
<feature type="modified residue" description="Phosphothreonine; by OXSR1 and STK39" evidence="5 6">
    <location>
        <position position="184"/>
    </location>
</feature>
<feature type="modified residue" description="Phosphothreonine" evidence="5 7">
    <location>
        <position position="189"/>
    </location>
</feature>
<feature type="modified residue" description="Phosphothreonine" evidence="5">
    <location>
        <position position="202"/>
    </location>
</feature>
<feature type="modified residue" description="Phosphothreonine" evidence="7">
    <location>
        <position position="1114"/>
    </location>
</feature>
<feature type="glycosylation site" description="N-linked (GlcNAc...) asparagine" evidence="3">
    <location>
        <position position="523"/>
    </location>
</feature>
<feature type="glycosylation site" description="N-linked (GlcNAc...) asparagine" evidence="3">
    <location>
        <position position="535"/>
    </location>
</feature>
<feature type="glycosylation site" description="N-linked (GlcNAc...) asparagine" evidence="3">
    <location>
        <position position="546"/>
    </location>
</feature>
<feature type="disulfide bond" evidence="2">
    <location>
        <begin position="536"/>
        <end position="541"/>
    </location>
</feature>
<feature type="disulfide bond" evidence="2">
    <location>
        <begin position="550"/>
        <end position="555"/>
    </location>
</feature>
<feature type="mutagenesis site" description="Abolished phosphorylation by STK39/SPAK." evidence="6">
    <original>THTNTYYLRT</original>
    <variation>ANAYYLRA</variation>
    <location>
        <begin position="175"/>
        <end position="184"/>
    </location>
</feature>
<feature type="mutagenesis site" description="Does not greatly affect cation-chloride cotransporter activity." evidence="5">
    <original>T</original>
    <variation>A</variation>
    <location>
        <position position="184"/>
    </location>
</feature>
<feature type="mutagenesis site" description="Abolished cation-chloride cotransporter activity." evidence="5">
    <original>T</original>
    <variation>A</variation>
    <variation>D</variation>
    <location>
        <position position="189"/>
    </location>
</feature>
<feature type="mutagenesis site" description="Does not greatly affect cation-chloride cotransporter activity." evidence="5">
    <original>T</original>
    <variation>A</variation>
    <location>
        <position position="202"/>
    </location>
</feature>
<keyword id="KW-1003">Cell membrane</keyword>
<keyword id="KW-0868">Chloride</keyword>
<keyword id="KW-1015">Disulfide bond</keyword>
<keyword id="KW-0325">Glycoprotein</keyword>
<keyword id="KW-0406">Ion transport</keyword>
<keyword id="KW-0472">Membrane</keyword>
<keyword id="KW-0479">Metal-binding</keyword>
<keyword id="KW-0597">Phosphoprotein</keyword>
<keyword id="KW-0630">Potassium</keyword>
<keyword id="KW-0633">Potassium transport</keyword>
<keyword id="KW-0915">Sodium</keyword>
<keyword id="KW-0739">Sodium transport</keyword>
<keyword id="KW-0769">Symport</keyword>
<keyword id="KW-0812">Transmembrane</keyword>
<keyword id="KW-1133">Transmembrane helix</keyword>
<keyword id="KW-0813">Transport</keyword>
<sequence>MEPAFPASSAGVQSQSGPEPGAGQQEPPPPATPLRPVASQSRFQVDLVTEGGGGGDGQKGQTAAQPAAAAKDKDRGDGGAAAPSPASPAAAAEPPAAAAEEAKGRFRVNFVDPASDEPPLSSQQQPPPPSSASSAHGGHQPPSESMNGYPQNGDTMMSEGSLHSSGTGAHHYYDTHTNTYYLRTFGHNTIDAVPRIDHYRHTVAQLGEKLIRPSLAELHDELDKEPFEDGYVNGEESSPAEEAVSKHVADNKGVVKFGWIKGVLVRCMLNIWGVMLFIRLSWIVGHAGIGLALLVIGTATVVTTITGLSTSAITTNGFVRGGGAYYLISRSLGPEFGGAIGLIFAFANAVAVAMYVVGFAETVRDLLVEHNALMIDEMSDIRIIGSVTIVVLFGISVAGMEWEAKAQIVLLGILLLAIVNFTVGTFIPANDKRAKGFFNYRGEIFSENFVPDFRDGEDFFSVFAIFFPAATGILAGANISGDLADPQLAIPKGTLLAILITTIVYAGAAVSVGSCIVREATGNLTDAIIPGTVTNCTNVACKLGFNFSSCATNKCSYGLMNDFQVMSLVSGFGPLITAGIFSATLSSALASLVSAPKIFQALCKDNIYPGLHVFSVGYGKNNEPLRGYVLTFFIGLGFILIAELNVIAPIISNFFLASYALINFSVFHASLAKSPGWRPAFRFYNMWISLIGAILCCGVMFVINWWAALLTNVIVLALYIYVTYKKPDVNWGSSTQALTYLNALQHAIRLTGVEDHVKNFRPQCLLMTGAPTSRPALLHLVHAFTKNVGLVVCGHVHTGPRRQALKEISTDQAKYQRWLIKNKMKAFYAPVYAEDLREGTQFLLQAVGLGRMRPNTLVFGFKKDWRQALMKDVENYINAIHDAFDYQYGVVVIRLKEGFNISHLQAQEELCTSQEKSAHPKDIVVNLEHSDADSSKPSSKSVSETNSPAVCQDQKDEEDDGKASTQPLLKKEVKDPSVPLNMTDQKLLQASSQFQKKQGKGTIDVWWLFDDGGLTLLIPYLLTTKKKWKDCKIRVFIGGKINRIDHDRRTMATLLSKFRIDFSDITVLGDMNTKPSKDNITAFEEMIEPFRLHEDDKEQEASEKMKEEEPWRITDNELEIYRMKTYRQIRLNELLRENSGTANLIVMSLPVARKGAVSSALYMAWIETLSKDLPPILLVRGNHQSVLTFYS</sequence>
<protein>
    <recommendedName>
        <fullName>Solute carrier family 12 member 2</fullName>
    </recommendedName>
    <alternativeName>
        <fullName>Bumetanide-sensitive sodium-(potassium)-chloride cotransporter 2</fullName>
        <shortName>BSC2</shortName>
    </alternativeName>
    <alternativeName>
        <fullName evidence="9">Na-K-2Cl cotransporter 1</fullName>
        <shortName>NKCC1</shortName>
    </alternativeName>
    <alternativeName>
        <fullName>Na-K-CL symporter</fullName>
    </alternativeName>
</protein>
<reference key="1">
    <citation type="journal article" date="1994" name="Proc. Natl. Acad. Sci. U.S.A.">
        <title>Molecular cloning and functional expression of the bumetanide-sensitive Na-K-Cl cotransporter.</title>
        <authorList>
            <person name="Xu J.-C."/>
            <person name="Lytle C."/>
            <person name="Zhu T.T."/>
            <person name="Payne J.A."/>
            <person name="Benz E. Jr."/>
            <person name="Forbush B. III"/>
        </authorList>
    </citation>
    <scope>NUCLEOTIDE SEQUENCE [MRNA]</scope>
    <scope>FUNCTION</scope>
    <scope>ACTIVITY REGULATION</scope>
    <scope>SUBCELLULAR LOCATION</scope>
    <scope>TISSUE SPECIFICITY</scope>
    <scope>PHOSPHORYLATION AT THR-189 AND THR-1114</scope>
    <source>
        <tissue>Rectal gland</tissue>
    </source>
</reference>
<reference key="2">
    <citation type="journal article" date="2002" name="J. Biol. Chem.">
        <title>A regulatory locus of phosphorylation in the N terminus of the Na-K-Cl cotransporter, NKCC1.</title>
        <authorList>
            <person name="Darman R.B."/>
            <person name="Forbush B."/>
        </authorList>
    </citation>
    <scope>PHOSPHORYLATION AT THR-184; THR-189 AND THR-202</scope>
    <scope>FUNCTION</scope>
    <scope>MUTAGENESIS OF THR-184; THR-189 AND THR-202</scope>
</reference>
<reference key="3">
    <citation type="journal article" date="2006" name="Biochem. J.">
        <title>Functional interactions of the SPAK/OSR1 kinases with their upstream activator WNK1 and downstream substrate NKCC1.</title>
        <authorList>
            <person name="Vitari A.C."/>
            <person name="Thastrup J."/>
            <person name="Rafiqi F.H."/>
            <person name="Deak M."/>
            <person name="Morrice N.A."/>
            <person name="Karlsson H.K."/>
            <person name="Alessi D.R."/>
        </authorList>
    </citation>
    <scope>PHOSPHORYLATION AT THR-175; THR-179 AND THR-184</scope>
    <scope>FUNCTION</scope>
    <scope>ACTIVITY REGULATION</scope>
    <scope>MUTAGENESIS OF 175-THR--THR-184</scope>
</reference>